<name>COXX_BACLD</name>
<keyword id="KW-1003">Cell membrane</keyword>
<keyword id="KW-0350">Heme biosynthesis</keyword>
<keyword id="KW-0472">Membrane</keyword>
<keyword id="KW-1185">Reference proteome</keyword>
<keyword id="KW-0808">Transferase</keyword>
<keyword id="KW-0812">Transmembrane</keyword>
<keyword id="KW-1133">Transmembrane helix</keyword>
<gene>
    <name evidence="1" type="primary">ctaB</name>
    <name type="ordered locus">BLi01705</name>
    <name type="ordered locus">BL02979</name>
</gene>
<evidence type="ECO:0000255" key="1">
    <source>
        <dbReference type="HAMAP-Rule" id="MF_00154"/>
    </source>
</evidence>
<sequence length="308" mass="34397">MAETRITADTAMNGQIEETTAWKDFLALIKVGIVYSNLITTFTGMWLAFYFSNLSFLGNLDIVLFTLAGSSLIIAGSCVINNFYDRDIDQLMQRTRTRPTVTGKIQPSQALWFGILLTALGFIMLLMTNLTAAGVGFVGVFTYVFLYTMWSKRRYTVNTIIGSVSGAVPPLIGWTAVQGSIGVEAWVLFLIMFIWQIPHFLALAIKKTEEYRAANIPMLPVVHGFEVTKRQIIIWIACLMPLPFFLGGLGLPIVILGTVLNIGWLVCGLVGYRSKNIMKWATLMFVYSLNYLTIFFVAMVVFTLFKIG</sequence>
<reference key="1">
    <citation type="journal article" date="2004" name="J. Mol. Microbiol. Biotechnol.">
        <title>The complete genome sequence of Bacillus licheniformis DSM13, an organism with great industrial potential.</title>
        <authorList>
            <person name="Veith B."/>
            <person name="Herzberg C."/>
            <person name="Steckel S."/>
            <person name="Feesche J."/>
            <person name="Maurer K.H."/>
            <person name="Ehrenreich P."/>
            <person name="Baeumer S."/>
            <person name="Henne A."/>
            <person name="Liesegang H."/>
            <person name="Merkl R."/>
            <person name="Ehrenreich A."/>
            <person name="Gottschalk G."/>
        </authorList>
    </citation>
    <scope>NUCLEOTIDE SEQUENCE [LARGE SCALE GENOMIC DNA]</scope>
    <source>
        <strain>ATCC 14580 / DSM 13 / JCM 2505 / CCUG 7422 / NBRC 12200 / NCIMB 9375 / NCTC 10341 / NRRL NRS-1264 / Gibson 46</strain>
    </source>
</reference>
<reference key="2">
    <citation type="journal article" date="2004" name="Genome Biol.">
        <title>Complete genome sequence of the industrial bacterium Bacillus licheniformis and comparisons with closely related Bacillus species.</title>
        <authorList>
            <person name="Rey M.W."/>
            <person name="Ramaiya P."/>
            <person name="Nelson B.A."/>
            <person name="Brody-Karpin S.D."/>
            <person name="Zaretsky E.J."/>
            <person name="Tang M."/>
            <person name="Lopez de Leon A."/>
            <person name="Xiang H."/>
            <person name="Gusti V."/>
            <person name="Clausen I.G."/>
            <person name="Olsen P.B."/>
            <person name="Rasmussen M.D."/>
            <person name="Andersen J.T."/>
            <person name="Joergensen P.L."/>
            <person name="Larsen T.S."/>
            <person name="Sorokin A."/>
            <person name="Bolotin A."/>
            <person name="Lapidus A."/>
            <person name="Galleron N."/>
            <person name="Ehrlich S.D."/>
            <person name="Berka R.M."/>
        </authorList>
    </citation>
    <scope>NUCLEOTIDE SEQUENCE [LARGE SCALE GENOMIC DNA]</scope>
    <source>
        <strain>ATCC 14580 / DSM 13 / JCM 2505 / CCUG 7422 / NBRC 12200 / NCIMB 9375 / NCTC 10341 / NRRL NRS-1264 / Gibson 46</strain>
    </source>
</reference>
<organism>
    <name type="scientific">Bacillus licheniformis (strain ATCC 14580 / DSM 13 / JCM 2505 / CCUG 7422 / NBRC 12200 / NCIMB 9375 / NCTC 10341 / NRRL NRS-1264 / Gibson 46)</name>
    <dbReference type="NCBI Taxonomy" id="279010"/>
    <lineage>
        <taxon>Bacteria</taxon>
        <taxon>Bacillati</taxon>
        <taxon>Bacillota</taxon>
        <taxon>Bacilli</taxon>
        <taxon>Bacillales</taxon>
        <taxon>Bacillaceae</taxon>
        <taxon>Bacillus</taxon>
    </lineage>
</organism>
<dbReference type="EC" id="2.5.1.141" evidence="1"/>
<dbReference type="EMBL" id="CP000002">
    <property type="protein sequence ID" value="AAU23244.1"/>
    <property type="molecule type" value="Genomic_DNA"/>
</dbReference>
<dbReference type="EMBL" id="AE017333">
    <property type="protein sequence ID" value="AAU40601.1"/>
    <property type="molecule type" value="Genomic_DNA"/>
</dbReference>
<dbReference type="SMR" id="Q65K13"/>
<dbReference type="STRING" id="279010.BL02979"/>
<dbReference type="KEGG" id="bld:BLi01705"/>
<dbReference type="KEGG" id="bli:BL02979"/>
<dbReference type="PATRIC" id="fig|279010.13.peg.1704"/>
<dbReference type="eggNOG" id="COG0109">
    <property type="taxonomic scope" value="Bacteria"/>
</dbReference>
<dbReference type="HOGENOM" id="CLU_029631_0_0_9"/>
<dbReference type="UniPathway" id="UPA00834">
    <property type="reaction ID" value="UER00712"/>
</dbReference>
<dbReference type="Proteomes" id="UP000000606">
    <property type="component" value="Chromosome"/>
</dbReference>
<dbReference type="GO" id="GO:0005886">
    <property type="term" value="C:plasma membrane"/>
    <property type="evidence" value="ECO:0007669"/>
    <property type="project" value="UniProtKB-SubCell"/>
</dbReference>
<dbReference type="GO" id="GO:0008495">
    <property type="term" value="F:protoheme IX farnesyltransferase activity"/>
    <property type="evidence" value="ECO:0007669"/>
    <property type="project" value="UniProtKB-UniRule"/>
</dbReference>
<dbReference type="GO" id="GO:0048034">
    <property type="term" value="P:heme O biosynthetic process"/>
    <property type="evidence" value="ECO:0007669"/>
    <property type="project" value="UniProtKB-UniRule"/>
</dbReference>
<dbReference type="CDD" id="cd13957">
    <property type="entry name" value="PT_UbiA_Cox10"/>
    <property type="match status" value="1"/>
</dbReference>
<dbReference type="FunFam" id="1.10.357.140:FF:000001">
    <property type="entry name" value="Protoheme IX farnesyltransferase"/>
    <property type="match status" value="1"/>
</dbReference>
<dbReference type="Gene3D" id="1.10.357.140">
    <property type="entry name" value="UbiA prenyltransferase"/>
    <property type="match status" value="1"/>
</dbReference>
<dbReference type="HAMAP" id="MF_00154">
    <property type="entry name" value="CyoE_CtaB"/>
    <property type="match status" value="1"/>
</dbReference>
<dbReference type="InterPro" id="IPR006369">
    <property type="entry name" value="Protohaem_IX_farnesylTrfase"/>
</dbReference>
<dbReference type="InterPro" id="IPR000537">
    <property type="entry name" value="UbiA_prenyltransferase"/>
</dbReference>
<dbReference type="InterPro" id="IPR030470">
    <property type="entry name" value="UbiA_prenylTrfase_CS"/>
</dbReference>
<dbReference type="InterPro" id="IPR044878">
    <property type="entry name" value="UbiA_sf"/>
</dbReference>
<dbReference type="NCBIfam" id="TIGR01473">
    <property type="entry name" value="cyoE_ctaB"/>
    <property type="match status" value="1"/>
</dbReference>
<dbReference type="PANTHER" id="PTHR43448">
    <property type="entry name" value="PROTOHEME IX FARNESYLTRANSFERASE, MITOCHONDRIAL"/>
    <property type="match status" value="1"/>
</dbReference>
<dbReference type="PANTHER" id="PTHR43448:SF2">
    <property type="entry name" value="PROTOHEME IX FARNESYLTRANSFERASE, MITOCHONDRIAL"/>
    <property type="match status" value="1"/>
</dbReference>
<dbReference type="Pfam" id="PF01040">
    <property type="entry name" value="UbiA"/>
    <property type="match status" value="1"/>
</dbReference>
<dbReference type="PROSITE" id="PS00943">
    <property type="entry name" value="UBIA"/>
    <property type="match status" value="1"/>
</dbReference>
<feature type="chain" id="PRO_0000327006" description="Protoheme IX farnesyltransferase">
    <location>
        <begin position="1"/>
        <end position="308"/>
    </location>
</feature>
<feature type="transmembrane region" description="Helical" evidence="1">
    <location>
        <begin position="31"/>
        <end position="51"/>
    </location>
</feature>
<feature type="transmembrane region" description="Helical" evidence="1">
    <location>
        <begin position="60"/>
        <end position="80"/>
    </location>
</feature>
<feature type="transmembrane region" description="Helical" evidence="1">
    <location>
        <begin position="110"/>
        <end position="130"/>
    </location>
</feature>
<feature type="transmembrane region" description="Helical" evidence="1">
    <location>
        <begin position="131"/>
        <end position="151"/>
    </location>
</feature>
<feature type="transmembrane region" description="Helical" evidence="1">
    <location>
        <begin position="157"/>
        <end position="177"/>
    </location>
</feature>
<feature type="transmembrane region" description="Helical" evidence="1">
    <location>
        <begin position="185"/>
        <end position="205"/>
    </location>
</feature>
<feature type="transmembrane region" description="Helical" evidence="1">
    <location>
        <begin position="232"/>
        <end position="252"/>
    </location>
</feature>
<feature type="transmembrane region" description="Helical" evidence="1">
    <location>
        <begin position="253"/>
        <end position="273"/>
    </location>
</feature>
<feature type="transmembrane region" description="Helical" evidence="1">
    <location>
        <begin position="285"/>
        <end position="305"/>
    </location>
</feature>
<protein>
    <recommendedName>
        <fullName evidence="1">Protoheme IX farnesyltransferase</fullName>
        <ecNumber evidence="1">2.5.1.141</ecNumber>
    </recommendedName>
    <alternativeName>
        <fullName evidence="1">Heme B farnesyltransferase</fullName>
    </alternativeName>
    <alternativeName>
        <fullName evidence="1">Heme O synthase</fullName>
    </alternativeName>
</protein>
<comment type="function">
    <text evidence="1">Converts heme B (protoheme IX) to heme O by substitution of the vinyl group on carbon 2 of heme B porphyrin ring with a hydroxyethyl farnesyl side group.</text>
</comment>
<comment type="catalytic activity">
    <reaction evidence="1">
        <text>heme b + (2E,6E)-farnesyl diphosphate + H2O = Fe(II)-heme o + diphosphate</text>
        <dbReference type="Rhea" id="RHEA:28070"/>
        <dbReference type="ChEBI" id="CHEBI:15377"/>
        <dbReference type="ChEBI" id="CHEBI:33019"/>
        <dbReference type="ChEBI" id="CHEBI:60344"/>
        <dbReference type="ChEBI" id="CHEBI:60530"/>
        <dbReference type="ChEBI" id="CHEBI:175763"/>
        <dbReference type="EC" id="2.5.1.141"/>
    </reaction>
</comment>
<comment type="pathway">
    <text evidence="1">Porphyrin-containing compound metabolism; heme O biosynthesis; heme O from protoheme: step 1/1.</text>
</comment>
<comment type="subunit">
    <text evidence="1">Interacts with CtaA.</text>
</comment>
<comment type="subcellular location">
    <subcellularLocation>
        <location evidence="1">Cell membrane</location>
        <topology evidence="1">Multi-pass membrane protein</topology>
    </subcellularLocation>
</comment>
<comment type="miscellaneous">
    <text evidence="1">Carbon 2 of the heme B porphyrin ring is defined according to the Fischer nomenclature.</text>
</comment>
<comment type="similarity">
    <text evidence="1">Belongs to the UbiA prenyltransferase family. Protoheme IX farnesyltransferase subfamily.</text>
</comment>
<proteinExistence type="inferred from homology"/>
<accession>Q65K13</accession>
<accession>Q62VG4</accession>